<evidence type="ECO:0000250" key="1">
    <source>
        <dbReference type="UniProtKB" id="Q6ZN55"/>
    </source>
</evidence>
<evidence type="ECO:0000255" key="2">
    <source>
        <dbReference type="PROSITE-ProRule" id="PRU00042"/>
    </source>
</evidence>
<evidence type="ECO:0000256" key="3">
    <source>
        <dbReference type="SAM" id="MobiDB-lite"/>
    </source>
</evidence>
<evidence type="ECO:0000305" key="4"/>
<evidence type="ECO:0007744" key="5">
    <source>
    </source>
</evidence>
<comment type="function">
    <text>May be involved in transcriptional regulation.</text>
</comment>
<comment type="subcellular location">
    <subcellularLocation>
        <location evidence="4">Nucleus</location>
    </subcellularLocation>
</comment>
<comment type="similarity">
    <text evidence="4">Belongs to the krueppel C2H2-type zinc-finger protein family.</text>
</comment>
<comment type="sequence caution" evidence="4">
    <conflict type="frameshift">
        <sequence resource="EMBL-CDS" id="BAC35502"/>
    </conflict>
</comment>
<organism>
    <name type="scientific">Mus musculus</name>
    <name type="common">Mouse</name>
    <dbReference type="NCBI Taxonomy" id="10090"/>
    <lineage>
        <taxon>Eukaryota</taxon>
        <taxon>Metazoa</taxon>
        <taxon>Chordata</taxon>
        <taxon>Craniata</taxon>
        <taxon>Vertebrata</taxon>
        <taxon>Euteleostomi</taxon>
        <taxon>Mammalia</taxon>
        <taxon>Eutheria</taxon>
        <taxon>Euarchontoglires</taxon>
        <taxon>Glires</taxon>
        <taxon>Rodentia</taxon>
        <taxon>Myomorpha</taxon>
        <taxon>Muroidea</taxon>
        <taxon>Muridae</taxon>
        <taxon>Murinae</taxon>
        <taxon>Mus</taxon>
        <taxon>Mus</taxon>
    </lineage>
</organism>
<proteinExistence type="evidence at protein level"/>
<feature type="chain" id="PRO_0000274863" description="Zinc finger protein 574">
    <location>
        <begin position="1"/>
        <end position="900"/>
    </location>
</feature>
<feature type="zinc finger region" description="C2H2-type 1" evidence="2">
    <location>
        <begin position="16"/>
        <end position="38"/>
    </location>
</feature>
<feature type="zinc finger region" description="C2H2-type 2" evidence="2">
    <location>
        <begin position="76"/>
        <end position="98"/>
    </location>
</feature>
<feature type="zinc finger region" description="C2H2-type 3" evidence="2">
    <location>
        <begin position="126"/>
        <end position="148"/>
    </location>
</feature>
<feature type="zinc finger region" description="C2H2-type 4" evidence="2">
    <location>
        <begin position="213"/>
        <end position="235"/>
    </location>
</feature>
<feature type="zinc finger region" description="C2H2-type 5" evidence="2">
    <location>
        <begin position="312"/>
        <end position="334"/>
    </location>
</feature>
<feature type="zinc finger region" description="C2H2-type 6" evidence="2">
    <location>
        <begin position="339"/>
        <end position="361"/>
    </location>
</feature>
<feature type="zinc finger region" description="C2H2-type 7" evidence="2">
    <location>
        <begin position="367"/>
        <end position="389"/>
    </location>
</feature>
<feature type="zinc finger region" description="C2H2-type 8" evidence="2">
    <location>
        <begin position="395"/>
        <end position="416"/>
    </location>
</feature>
<feature type="zinc finger region" description="C2H2-type 9" evidence="2">
    <location>
        <begin position="469"/>
        <end position="492"/>
    </location>
</feature>
<feature type="zinc finger region" description="C2H2-type 10" evidence="2">
    <location>
        <begin position="498"/>
        <end position="520"/>
    </location>
</feature>
<feature type="zinc finger region" description="C2H2-type 11" evidence="2">
    <location>
        <begin position="526"/>
        <end position="548"/>
    </location>
</feature>
<feature type="zinc finger region" description="C2H2-type 12" evidence="2">
    <location>
        <begin position="554"/>
        <end position="576"/>
    </location>
</feature>
<feature type="zinc finger region" description="C2H2-type 13" evidence="2">
    <location>
        <begin position="582"/>
        <end position="604"/>
    </location>
</feature>
<feature type="zinc finger region" description="C2H2-type 14" evidence="2">
    <location>
        <begin position="610"/>
        <end position="633"/>
    </location>
</feature>
<feature type="zinc finger region" description="C2H2-type 15; degenerate" evidence="2">
    <location>
        <begin position="639"/>
        <end position="662"/>
    </location>
</feature>
<feature type="zinc finger region" description="C2H2-type 16" evidence="2">
    <location>
        <begin position="670"/>
        <end position="692"/>
    </location>
</feature>
<feature type="zinc finger region" description="C2H2-type 17" evidence="2">
    <location>
        <begin position="742"/>
        <end position="764"/>
    </location>
</feature>
<feature type="zinc finger region" description="C2H2-type 18" evidence="2">
    <location>
        <begin position="770"/>
        <end position="792"/>
    </location>
</feature>
<feature type="zinc finger region" description="C2H2-type 19" evidence="2">
    <location>
        <begin position="798"/>
        <end position="820"/>
    </location>
</feature>
<feature type="zinc finger region" description="C2H2-type 20" evidence="2">
    <location>
        <begin position="826"/>
        <end position="848"/>
    </location>
</feature>
<feature type="region of interest" description="Disordered" evidence="3">
    <location>
        <begin position="244"/>
        <end position="306"/>
    </location>
</feature>
<feature type="region of interest" description="Disordered" evidence="3">
    <location>
        <begin position="690"/>
        <end position="741"/>
    </location>
</feature>
<feature type="compositionally biased region" description="Low complexity" evidence="3">
    <location>
        <begin position="244"/>
        <end position="254"/>
    </location>
</feature>
<feature type="compositionally biased region" description="Basic and acidic residues" evidence="3">
    <location>
        <begin position="273"/>
        <end position="290"/>
    </location>
</feature>
<feature type="compositionally biased region" description="Low complexity" evidence="3">
    <location>
        <begin position="721"/>
        <end position="736"/>
    </location>
</feature>
<feature type="modified residue" description="Phosphoserine" evidence="1">
    <location>
        <position position="164"/>
    </location>
</feature>
<feature type="modified residue" description="Phosphoserine" evidence="5">
    <location>
        <position position="301"/>
    </location>
</feature>
<feature type="modified residue" description="Phosphoserine" evidence="1">
    <location>
        <position position="721"/>
    </location>
</feature>
<feature type="modified residue" description="Phosphothreonine" evidence="1">
    <location>
        <position position="728"/>
    </location>
</feature>
<feature type="modified residue" description="Asymmetric dimethylarginine" evidence="1">
    <location>
        <position position="836"/>
    </location>
</feature>
<feature type="sequence conflict" description="In Ref. 1; BAE41657." evidence="4" ref="1">
    <original>T</original>
    <variation>A</variation>
    <location>
        <position position="201"/>
    </location>
</feature>
<feature type="sequence conflict" description="In Ref. 1; BAE25656." evidence="4" ref="1">
    <original>G</original>
    <variation>S</variation>
    <location>
        <position position="504"/>
    </location>
</feature>
<feature type="sequence conflict" description="In Ref. 1; BAC35502." evidence="4" ref="1">
    <original>E</original>
    <variation>D</variation>
    <location>
        <position position="699"/>
    </location>
</feature>
<feature type="sequence conflict" description="In Ref. 1; BAC35502." evidence="4" ref="1">
    <original>L</original>
    <variation>V</variation>
    <location>
        <position position="701"/>
    </location>
</feature>
<feature type="sequence conflict" description="In Ref. 1; BAC35502." evidence="4" ref="1">
    <original>A</original>
    <variation>S</variation>
    <location>
        <position position="731"/>
    </location>
</feature>
<protein>
    <recommendedName>
        <fullName>Zinc finger protein 574</fullName>
    </recommendedName>
</protein>
<sequence>MTEESEETVLYIEHRYVCSECNQLYGSLEEVLVHQNSHVPQQHFELVGVADPGVTVATEAASGTGLYQTLIQESQYQCLECGQLLLSPSQLLEHQELHLKMMAPQEAVPAKPPPKVPPLGSSAIHYECVDCKALFASQEMWLSHRQTHLRATPNKAPAPVVLGSPVVLGPPVGQARVAVEHSYRKAEEGGEGAAVPSVAATTEMVTEVELLLYKCSECSQLFQMPADFLEHQATHFPAPVPEAAEPATQQETQVPSPTEAAVSQPEPLPASDHSYELRNELRNGEAIGRDRRGRKPRRNNSGESGGAATQELFCSACDQLFLSPHQLQQHLRSHREGVFKCPLCSRVFPSPSSLDQHLGDHSSESHFLCVDCGLAFGTEALLLAHRRAHTPNPLHSCPCGKTFVNLTKFLYHRRTHGAGGVPLPTTPVPPEEPAISFPEPAPAETGELEAPELPVCEESSAEPAAPGSYRCLLCSREFGKALQLTRHQRFVHRLERRHKCSICGKMFKKKSHVRNHLRTHTGERPFPCPDCSKPFNSPANLARHRLTHTGERPYRCGDCGKAFTQSSTLRQHRLVHAQHFPYRCQECGVRFHRPYRLLMHRYHHTGEYPYKCRECPRSFLLRRLLEVHQLVIHAGRQPYRCSSCGAAFPSSLRLREHRCAAAAAQAPRRFECGTCGKKVGSAARLQAHEAAHAAAGPGEVLAKEPPAPRASRATRTPVAPSPTALSGTTSAAPAAPARRRGPECSECKKLFSTETSLQVHRRIHTGERPYPCPDCGKAFRQSTHLKDHRRLHTGERPFACEVCGKAFAISMRLAEHRRIHTGERPYSCPDCGKSYRSFSNLWKHRKTHQQQHQAAVRQQLAEAEAAVGLAVMETAVEALPLVEAIEIYPLAEADGVQISG</sequence>
<dbReference type="EMBL" id="AK042074">
    <property type="protein sequence ID" value="BAC31155.1"/>
    <property type="molecule type" value="mRNA"/>
</dbReference>
<dbReference type="EMBL" id="AK053744">
    <property type="protein sequence ID" value="BAC35502.1"/>
    <property type="status" value="ALT_FRAME"/>
    <property type="molecule type" value="mRNA"/>
</dbReference>
<dbReference type="EMBL" id="AK143997">
    <property type="protein sequence ID" value="BAE25656.1"/>
    <property type="molecule type" value="mRNA"/>
</dbReference>
<dbReference type="EMBL" id="AK170243">
    <property type="protein sequence ID" value="BAE41657.1"/>
    <property type="molecule type" value="mRNA"/>
</dbReference>
<dbReference type="EMBL" id="BC059044">
    <property type="protein sequence ID" value="AAH59044.1"/>
    <property type="molecule type" value="mRNA"/>
</dbReference>
<dbReference type="CCDS" id="CCDS20971.1"/>
<dbReference type="RefSeq" id="NP_001161978.1">
    <property type="nucleotide sequence ID" value="NM_001168506.1"/>
</dbReference>
<dbReference type="RefSeq" id="NP_780686.1">
    <property type="nucleotide sequence ID" value="NM_175477.4"/>
</dbReference>
<dbReference type="RefSeq" id="XP_006539914.1">
    <property type="nucleotide sequence ID" value="XM_006539851.3"/>
</dbReference>
<dbReference type="RefSeq" id="XP_006539915.1">
    <property type="nucleotide sequence ID" value="XM_006539852.3"/>
</dbReference>
<dbReference type="RefSeq" id="XP_017177647.1">
    <property type="nucleotide sequence ID" value="XM_017322158.1"/>
</dbReference>
<dbReference type="SMR" id="Q8BY46"/>
<dbReference type="BioGRID" id="231340">
    <property type="interactions" value="1"/>
</dbReference>
<dbReference type="FunCoup" id="Q8BY46">
    <property type="interactions" value="1064"/>
</dbReference>
<dbReference type="IntAct" id="Q8BY46">
    <property type="interactions" value="1"/>
</dbReference>
<dbReference type="STRING" id="10090.ENSMUSP00000136547"/>
<dbReference type="GlyGen" id="Q8BY46">
    <property type="glycosylation" value="1 site"/>
</dbReference>
<dbReference type="iPTMnet" id="Q8BY46"/>
<dbReference type="PhosphoSitePlus" id="Q8BY46"/>
<dbReference type="PaxDb" id="10090-ENSMUSP00000057817"/>
<dbReference type="PeptideAtlas" id="Q8BY46"/>
<dbReference type="ProteomicsDB" id="275296"/>
<dbReference type="Pumba" id="Q8BY46"/>
<dbReference type="Antibodypedia" id="30883">
    <property type="antibodies" value="61 antibodies from 20 providers"/>
</dbReference>
<dbReference type="DNASU" id="232976"/>
<dbReference type="Ensembl" id="ENSMUST00000053410.11">
    <property type="protein sequence ID" value="ENSMUSP00000057817.10"/>
    <property type="gene ID" value="ENSMUSG00000045252.12"/>
</dbReference>
<dbReference type="Ensembl" id="ENSMUST00000179556.2">
    <property type="protein sequence ID" value="ENSMUSP00000136547.2"/>
    <property type="gene ID" value="ENSMUSG00000045252.12"/>
</dbReference>
<dbReference type="GeneID" id="232976"/>
<dbReference type="KEGG" id="mmu:232976"/>
<dbReference type="UCSC" id="uc009frj.2">
    <property type="organism name" value="mouse"/>
</dbReference>
<dbReference type="AGR" id="MGI:2442951"/>
<dbReference type="CTD" id="232976"/>
<dbReference type="MGI" id="MGI:2442951">
    <property type="gene designation" value="Zfp574"/>
</dbReference>
<dbReference type="VEuPathDB" id="HostDB:ENSMUSG00000045252"/>
<dbReference type="eggNOG" id="KOG1721">
    <property type="taxonomic scope" value="Eukaryota"/>
</dbReference>
<dbReference type="GeneTree" id="ENSGT00940000161799"/>
<dbReference type="HOGENOM" id="CLU_002678_24_1_1"/>
<dbReference type="InParanoid" id="Q8BY46"/>
<dbReference type="OMA" id="DCAKPFN"/>
<dbReference type="OrthoDB" id="8922241at2759"/>
<dbReference type="PhylomeDB" id="Q8BY46"/>
<dbReference type="TreeFam" id="TF350791"/>
<dbReference type="BioGRID-ORCS" id="232976">
    <property type="hits" value="15 hits in 78 CRISPR screens"/>
</dbReference>
<dbReference type="ChiTaRS" id="Zfp574">
    <property type="organism name" value="mouse"/>
</dbReference>
<dbReference type="PRO" id="PR:Q8BY46"/>
<dbReference type="Proteomes" id="UP000000589">
    <property type="component" value="Chromosome 7"/>
</dbReference>
<dbReference type="RNAct" id="Q8BY46">
    <property type="molecule type" value="protein"/>
</dbReference>
<dbReference type="Bgee" id="ENSMUSG00000045252">
    <property type="expression patterns" value="Expressed in seminiferous tubule of testis and 246 other cell types or tissues"/>
</dbReference>
<dbReference type="GO" id="GO:0005634">
    <property type="term" value="C:nucleus"/>
    <property type="evidence" value="ECO:0007669"/>
    <property type="project" value="UniProtKB-SubCell"/>
</dbReference>
<dbReference type="GO" id="GO:0003677">
    <property type="term" value="F:DNA binding"/>
    <property type="evidence" value="ECO:0007669"/>
    <property type="project" value="UniProtKB-KW"/>
</dbReference>
<dbReference type="GO" id="GO:0008270">
    <property type="term" value="F:zinc ion binding"/>
    <property type="evidence" value="ECO:0007669"/>
    <property type="project" value="UniProtKB-KW"/>
</dbReference>
<dbReference type="FunFam" id="3.30.160.60:FF:000145">
    <property type="entry name" value="Zinc finger protein 574"/>
    <property type="match status" value="1"/>
</dbReference>
<dbReference type="FunFam" id="3.30.160.60:FF:000202">
    <property type="entry name" value="Zinc finger protein 574"/>
    <property type="match status" value="1"/>
</dbReference>
<dbReference type="FunFam" id="3.30.160.60:FF:000788">
    <property type="entry name" value="Zinc finger protein 574"/>
    <property type="match status" value="1"/>
</dbReference>
<dbReference type="FunFam" id="3.30.160.60:FF:001231">
    <property type="entry name" value="Zinc finger protein 574"/>
    <property type="match status" value="1"/>
</dbReference>
<dbReference type="FunFam" id="3.30.160.60:FF:000381">
    <property type="entry name" value="zinc finger protein 574"/>
    <property type="match status" value="3"/>
</dbReference>
<dbReference type="FunFam" id="3.30.160.60:FF:001169">
    <property type="entry name" value="zinc finger protein 574"/>
    <property type="match status" value="1"/>
</dbReference>
<dbReference type="FunFam" id="3.30.160.60:FF:001184">
    <property type="entry name" value="zinc finger protein 574"/>
    <property type="match status" value="1"/>
</dbReference>
<dbReference type="FunFam" id="3.30.160.60:FF:001285">
    <property type="entry name" value="zinc finger protein 574"/>
    <property type="match status" value="1"/>
</dbReference>
<dbReference type="Gene3D" id="3.30.160.60">
    <property type="entry name" value="Classic Zinc Finger"/>
    <property type="match status" value="13"/>
</dbReference>
<dbReference type="InterPro" id="IPR036236">
    <property type="entry name" value="Znf_C2H2_sf"/>
</dbReference>
<dbReference type="InterPro" id="IPR013087">
    <property type="entry name" value="Znf_C2H2_type"/>
</dbReference>
<dbReference type="PANTHER" id="PTHR24393:SF158">
    <property type="entry name" value="C2H2-TYPE DOMAIN-CONTAINING PROTEIN"/>
    <property type="match status" value="1"/>
</dbReference>
<dbReference type="PANTHER" id="PTHR24393">
    <property type="entry name" value="ZINC FINGER PROTEIN"/>
    <property type="match status" value="1"/>
</dbReference>
<dbReference type="Pfam" id="PF00096">
    <property type="entry name" value="zf-C2H2"/>
    <property type="match status" value="6"/>
</dbReference>
<dbReference type="Pfam" id="PF13912">
    <property type="entry name" value="zf-C2H2_6"/>
    <property type="match status" value="2"/>
</dbReference>
<dbReference type="Pfam" id="PF12874">
    <property type="entry name" value="zf-met"/>
    <property type="match status" value="1"/>
</dbReference>
<dbReference type="SMART" id="SM00355">
    <property type="entry name" value="ZnF_C2H2"/>
    <property type="match status" value="20"/>
</dbReference>
<dbReference type="SUPFAM" id="SSF57667">
    <property type="entry name" value="beta-beta-alpha zinc fingers"/>
    <property type="match status" value="11"/>
</dbReference>
<dbReference type="PROSITE" id="PS00028">
    <property type="entry name" value="ZINC_FINGER_C2H2_1"/>
    <property type="match status" value="18"/>
</dbReference>
<dbReference type="PROSITE" id="PS50157">
    <property type="entry name" value="ZINC_FINGER_C2H2_2"/>
    <property type="match status" value="19"/>
</dbReference>
<gene>
    <name type="primary">Znf574</name>
    <name type="synonym">Zfp574</name>
</gene>
<reference key="1">
    <citation type="journal article" date="2005" name="Science">
        <title>The transcriptional landscape of the mammalian genome.</title>
        <authorList>
            <person name="Carninci P."/>
            <person name="Kasukawa T."/>
            <person name="Katayama S."/>
            <person name="Gough J."/>
            <person name="Frith M.C."/>
            <person name="Maeda N."/>
            <person name="Oyama R."/>
            <person name="Ravasi T."/>
            <person name="Lenhard B."/>
            <person name="Wells C."/>
            <person name="Kodzius R."/>
            <person name="Shimokawa K."/>
            <person name="Bajic V.B."/>
            <person name="Brenner S.E."/>
            <person name="Batalov S."/>
            <person name="Forrest A.R."/>
            <person name="Zavolan M."/>
            <person name="Davis M.J."/>
            <person name="Wilming L.G."/>
            <person name="Aidinis V."/>
            <person name="Allen J.E."/>
            <person name="Ambesi-Impiombato A."/>
            <person name="Apweiler R."/>
            <person name="Aturaliya R.N."/>
            <person name="Bailey T.L."/>
            <person name="Bansal M."/>
            <person name="Baxter L."/>
            <person name="Beisel K.W."/>
            <person name="Bersano T."/>
            <person name="Bono H."/>
            <person name="Chalk A.M."/>
            <person name="Chiu K.P."/>
            <person name="Choudhary V."/>
            <person name="Christoffels A."/>
            <person name="Clutterbuck D.R."/>
            <person name="Crowe M.L."/>
            <person name="Dalla E."/>
            <person name="Dalrymple B.P."/>
            <person name="de Bono B."/>
            <person name="Della Gatta G."/>
            <person name="di Bernardo D."/>
            <person name="Down T."/>
            <person name="Engstrom P."/>
            <person name="Fagiolini M."/>
            <person name="Faulkner G."/>
            <person name="Fletcher C.F."/>
            <person name="Fukushima T."/>
            <person name="Furuno M."/>
            <person name="Futaki S."/>
            <person name="Gariboldi M."/>
            <person name="Georgii-Hemming P."/>
            <person name="Gingeras T.R."/>
            <person name="Gojobori T."/>
            <person name="Green R.E."/>
            <person name="Gustincich S."/>
            <person name="Harbers M."/>
            <person name="Hayashi Y."/>
            <person name="Hensch T.K."/>
            <person name="Hirokawa N."/>
            <person name="Hill D."/>
            <person name="Huminiecki L."/>
            <person name="Iacono M."/>
            <person name="Ikeo K."/>
            <person name="Iwama A."/>
            <person name="Ishikawa T."/>
            <person name="Jakt M."/>
            <person name="Kanapin A."/>
            <person name="Katoh M."/>
            <person name="Kawasawa Y."/>
            <person name="Kelso J."/>
            <person name="Kitamura H."/>
            <person name="Kitano H."/>
            <person name="Kollias G."/>
            <person name="Krishnan S.P."/>
            <person name="Kruger A."/>
            <person name="Kummerfeld S.K."/>
            <person name="Kurochkin I.V."/>
            <person name="Lareau L.F."/>
            <person name="Lazarevic D."/>
            <person name="Lipovich L."/>
            <person name="Liu J."/>
            <person name="Liuni S."/>
            <person name="McWilliam S."/>
            <person name="Madan Babu M."/>
            <person name="Madera M."/>
            <person name="Marchionni L."/>
            <person name="Matsuda H."/>
            <person name="Matsuzawa S."/>
            <person name="Miki H."/>
            <person name="Mignone F."/>
            <person name="Miyake S."/>
            <person name="Morris K."/>
            <person name="Mottagui-Tabar S."/>
            <person name="Mulder N."/>
            <person name="Nakano N."/>
            <person name="Nakauchi H."/>
            <person name="Ng P."/>
            <person name="Nilsson R."/>
            <person name="Nishiguchi S."/>
            <person name="Nishikawa S."/>
            <person name="Nori F."/>
            <person name="Ohara O."/>
            <person name="Okazaki Y."/>
            <person name="Orlando V."/>
            <person name="Pang K.C."/>
            <person name="Pavan W.J."/>
            <person name="Pavesi G."/>
            <person name="Pesole G."/>
            <person name="Petrovsky N."/>
            <person name="Piazza S."/>
            <person name="Reed J."/>
            <person name="Reid J.F."/>
            <person name="Ring B.Z."/>
            <person name="Ringwald M."/>
            <person name="Rost B."/>
            <person name="Ruan Y."/>
            <person name="Salzberg S.L."/>
            <person name="Sandelin A."/>
            <person name="Schneider C."/>
            <person name="Schoenbach C."/>
            <person name="Sekiguchi K."/>
            <person name="Semple C.A."/>
            <person name="Seno S."/>
            <person name="Sessa L."/>
            <person name="Sheng Y."/>
            <person name="Shibata Y."/>
            <person name="Shimada H."/>
            <person name="Shimada K."/>
            <person name="Silva D."/>
            <person name="Sinclair B."/>
            <person name="Sperling S."/>
            <person name="Stupka E."/>
            <person name="Sugiura K."/>
            <person name="Sultana R."/>
            <person name="Takenaka Y."/>
            <person name="Taki K."/>
            <person name="Tammoja K."/>
            <person name="Tan S.L."/>
            <person name="Tang S."/>
            <person name="Taylor M.S."/>
            <person name="Tegner J."/>
            <person name="Teichmann S.A."/>
            <person name="Ueda H.R."/>
            <person name="van Nimwegen E."/>
            <person name="Verardo R."/>
            <person name="Wei C.L."/>
            <person name="Yagi K."/>
            <person name="Yamanishi H."/>
            <person name="Zabarovsky E."/>
            <person name="Zhu S."/>
            <person name="Zimmer A."/>
            <person name="Hide W."/>
            <person name="Bult C."/>
            <person name="Grimmond S.M."/>
            <person name="Teasdale R.D."/>
            <person name="Liu E.T."/>
            <person name="Brusic V."/>
            <person name="Quackenbush J."/>
            <person name="Wahlestedt C."/>
            <person name="Mattick J.S."/>
            <person name="Hume D.A."/>
            <person name="Kai C."/>
            <person name="Sasaki D."/>
            <person name="Tomaru Y."/>
            <person name="Fukuda S."/>
            <person name="Kanamori-Katayama M."/>
            <person name="Suzuki M."/>
            <person name="Aoki J."/>
            <person name="Arakawa T."/>
            <person name="Iida J."/>
            <person name="Imamura K."/>
            <person name="Itoh M."/>
            <person name="Kato T."/>
            <person name="Kawaji H."/>
            <person name="Kawagashira N."/>
            <person name="Kawashima T."/>
            <person name="Kojima M."/>
            <person name="Kondo S."/>
            <person name="Konno H."/>
            <person name="Nakano K."/>
            <person name="Ninomiya N."/>
            <person name="Nishio T."/>
            <person name="Okada M."/>
            <person name="Plessy C."/>
            <person name="Shibata K."/>
            <person name="Shiraki T."/>
            <person name="Suzuki S."/>
            <person name="Tagami M."/>
            <person name="Waki K."/>
            <person name="Watahiki A."/>
            <person name="Okamura-Oho Y."/>
            <person name="Suzuki H."/>
            <person name="Kawai J."/>
            <person name="Hayashizaki Y."/>
        </authorList>
    </citation>
    <scope>NUCLEOTIDE SEQUENCE [LARGE SCALE MRNA]</scope>
    <source>
        <strain>C57BL/6J</strain>
        <strain>NOD</strain>
        <tissue>Dendritic cell</tissue>
        <tissue>Eye</tissue>
        <tissue>Kidney</tissue>
        <tissue>Thymus</tissue>
    </source>
</reference>
<reference key="2">
    <citation type="journal article" date="2004" name="Genome Res.">
        <title>The status, quality, and expansion of the NIH full-length cDNA project: the Mammalian Gene Collection (MGC).</title>
        <authorList>
            <consortium name="The MGC Project Team"/>
        </authorList>
    </citation>
    <scope>NUCLEOTIDE SEQUENCE [LARGE SCALE MRNA]</scope>
    <source>
        <strain>C57BL/6J</strain>
        <tissue>Brain</tissue>
    </source>
</reference>
<reference key="3">
    <citation type="journal article" date="2010" name="Cell">
        <title>A tissue-specific atlas of mouse protein phosphorylation and expression.</title>
        <authorList>
            <person name="Huttlin E.L."/>
            <person name="Jedrychowski M.P."/>
            <person name="Elias J.E."/>
            <person name="Goswami T."/>
            <person name="Rad R."/>
            <person name="Beausoleil S.A."/>
            <person name="Villen J."/>
            <person name="Haas W."/>
            <person name="Sowa M.E."/>
            <person name="Gygi S.P."/>
        </authorList>
    </citation>
    <scope>PHOSPHORYLATION [LARGE SCALE ANALYSIS] AT SER-301</scope>
    <scope>IDENTIFICATION BY MASS SPECTROMETRY [LARGE SCALE ANALYSIS]</scope>
    <source>
        <tissue>Brain</tissue>
        <tissue>Lung</tissue>
        <tissue>Spleen</tissue>
    </source>
</reference>
<keyword id="KW-0238">DNA-binding</keyword>
<keyword id="KW-0479">Metal-binding</keyword>
<keyword id="KW-0488">Methylation</keyword>
<keyword id="KW-0539">Nucleus</keyword>
<keyword id="KW-0597">Phosphoprotein</keyword>
<keyword id="KW-1185">Reference proteome</keyword>
<keyword id="KW-0677">Repeat</keyword>
<keyword id="KW-0804">Transcription</keyword>
<keyword id="KW-0805">Transcription regulation</keyword>
<keyword id="KW-0862">Zinc</keyword>
<keyword id="KW-0863">Zinc-finger</keyword>
<accession>Q8BY46</accession>
<accession>Q3TDE5</accession>
<accession>Q3UNU1</accession>
<accession>Q8BKB5</accession>
<name>ZN574_MOUSE</name>